<sequence>MSAIAPGMILIAYLCGSISSAILVCRLCGLPDPRTSGSGNPGATNVLRIGGKGAAVAVLIFDVLKGMLPVWGAYELGVSPFWLGLIAIAACLGHIWPVFFGFKGGKGVATAFGAIAPIGWDLTGVMAGTWLLTVLLSGYSSLGAIVSALIAPFYVWWFKPQFTFPVSMLSCLILLRHHDNIQRLWRRQETKIWTKFKRKREKDPE</sequence>
<dbReference type="EC" id="2.3.1.15" evidence="1"/>
<dbReference type="EC" id="2.3.1.n5" evidence="1"/>
<dbReference type="EMBL" id="CP001063">
    <property type="protein sequence ID" value="ACD08009.1"/>
    <property type="molecule type" value="Genomic_DNA"/>
</dbReference>
<dbReference type="RefSeq" id="WP_001272796.1">
    <property type="nucleotide sequence ID" value="NC_010658.1"/>
</dbReference>
<dbReference type="SMR" id="B2U1G3"/>
<dbReference type="STRING" id="344609.SbBS512_E3490"/>
<dbReference type="GeneID" id="93778934"/>
<dbReference type="KEGG" id="sbc:SbBS512_E3490"/>
<dbReference type="HOGENOM" id="CLU_081254_0_2_6"/>
<dbReference type="UniPathway" id="UPA00085"/>
<dbReference type="Proteomes" id="UP000001030">
    <property type="component" value="Chromosome"/>
</dbReference>
<dbReference type="GO" id="GO:0005886">
    <property type="term" value="C:plasma membrane"/>
    <property type="evidence" value="ECO:0007669"/>
    <property type="project" value="UniProtKB-SubCell"/>
</dbReference>
<dbReference type="GO" id="GO:0043772">
    <property type="term" value="F:acyl-phosphate glycerol-3-phosphate acyltransferase activity"/>
    <property type="evidence" value="ECO:0007669"/>
    <property type="project" value="InterPro"/>
</dbReference>
<dbReference type="GO" id="GO:0004366">
    <property type="term" value="F:glycerol-3-phosphate O-acyltransferase activity"/>
    <property type="evidence" value="ECO:0007669"/>
    <property type="project" value="UniProtKB-UniRule"/>
</dbReference>
<dbReference type="GO" id="GO:0008654">
    <property type="term" value="P:phospholipid biosynthetic process"/>
    <property type="evidence" value="ECO:0007669"/>
    <property type="project" value="UniProtKB-UniRule"/>
</dbReference>
<dbReference type="HAMAP" id="MF_01043">
    <property type="entry name" value="PlsY"/>
    <property type="match status" value="1"/>
</dbReference>
<dbReference type="InterPro" id="IPR003811">
    <property type="entry name" value="G3P_acylTferase_PlsY"/>
</dbReference>
<dbReference type="NCBIfam" id="TIGR00023">
    <property type="entry name" value="glycerol-3-phosphate 1-O-acyltransferase PlsY"/>
    <property type="match status" value="1"/>
</dbReference>
<dbReference type="PANTHER" id="PTHR30309:SF0">
    <property type="entry name" value="GLYCEROL-3-PHOSPHATE ACYLTRANSFERASE-RELATED"/>
    <property type="match status" value="1"/>
</dbReference>
<dbReference type="PANTHER" id="PTHR30309">
    <property type="entry name" value="INNER MEMBRANE PROTEIN YGIH"/>
    <property type="match status" value="1"/>
</dbReference>
<dbReference type="Pfam" id="PF02660">
    <property type="entry name" value="G3P_acyltransf"/>
    <property type="match status" value="1"/>
</dbReference>
<dbReference type="SMART" id="SM01207">
    <property type="entry name" value="G3P_acyltransf"/>
    <property type="match status" value="1"/>
</dbReference>
<proteinExistence type="inferred from homology"/>
<name>PLSY_SHIB3</name>
<gene>
    <name evidence="1" type="primary">plsY</name>
    <name type="synonym">ygiH</name>
    <name type="ordered locus">SbBS512_E3490</name>
</gene>
<reference key="1">
    <citation type="submission" date="2008-05" db="EMBL/GenBank/DDBJ databases">
        <title>Complete sequence of Shigella boydii serotype 18 strain BS512.</title>
        <authorList>
            <person name="Rasko D.A."/>
            <person name="Rosovitz M."/>
            <person name="Maurelli A.T."/>
            <person name="Myers G."/>
            <person name="Seshadri R."/>
            <person name="Cer R."/>
            <person name="Jiang L."/>
            <person name="Ravel J."/>
            <person name="Sebastian Y."/>
        </authorList>
    </citation>
    <scope>NUCLEOTIDE SEQUENCE [LARGE SCALE GENOMIC DNA]</scope>
    <source>
        <strain>CDC 3083-94 / BS512</strain>
    </source>
</reference>
<protein>
    <recommendedName>
        <fullName evidence="1">Glycerol-3-phosphate acyltransferase</fullName>
    </recommendedName>
    <alternativeName>
        <fullName evidence="1">G3P acyltransferase</fullName>
        <shortName evidence="1">GPAT</shortName>
        <ecNumber evidence="1">2.3.1.15</ecNumber>
        <ecNumber evidence="1">2.3.1.n5</ecNumber>
    </alternativeName>
    <alternativeName>
        <fullName evidence="1">Lysophosphatidic acid synthase</fullName>
        <shortName evidence="1">LPA synthase</shortName>
    </alternativeName>
</protein>
<comment type="function">
    <text evidence="1">Catalyzes the transfer of an acyl group from acyl-ACP to glycerol-3-phosphate (G3P) to form lysophosphatidic acid (LPA). This enzyme can also utilize acyl-CoA as fatty acyl donor, but not acyl-PO(4).</text>
</comment>
<comment type="catalytic activity">
    <reaction evidence="1">
        <text>sn-glycerol 3-phosphate + an acyl-CoA = a 1-acyl-sn-glycero-3-phosphate + CoA</text>
        <dbReference type="Rhea" id="RHEA:15325"/>
        <dbReference type="ChEBI" id="CHEBI:57287"/>
        <dbReference type="ChEBI" id="CHEBI:57597"/>
        <dbReference type="ChEBI" id="CHEBI:57970"/>
        <dbReference type="ChEBI" id="CHEBI:58342"/>
        <dbReference type="EC" id="2.3.1.15"/>
    </reaction>
</comment>
<comment type="catalytic activity">
    <reaction evidence="1">
        <text>a fatty acyl-[ACP] + sn-glycerol 3-phosphate = a 1-acyl-sn-glycero-3-phosphate + holo-[ACP]</text>
        <dbReference type="Rhea" id="RHEA:42300"/>
        <dbReference type="Rhea" id="RHEA-COMP:9685"/>
        <dbReference type="Rhea" id="RHEA-COMP:14125"/>
        <dbReference type="ChEBI" id="CHEBI:57597"/>
        <dbReference type="ChEBI" id="CHEBI:57970"/>
        <dbReference type="ChEBI" id="CHEBI:64479"/>
        <dbReference type="ChEBI" id="CHEBI:138651"/>
        <dbReference type="EC" id="2.3.1.n5"/>
    </reaction>
</comment>
<comment type="pathway">
    <text evidence="1">Lipid metabolism; phospholipid metabolism.</text>
</comment>
<comment type="subunit">
    <text evidence="1">Probably interacts with PlsX.</text>
</comment>
<comment type="subcellular location">
    <subcellularLocation>
        <location evidence="1">Cell inner membrane</location>
        <topology evidence="1">Multi-pass membrane protein</topology>
    </subcellularLocation>
</comment>
<comment type="similarity">
    <text evidence="1">Belongs to the PlsY family.</text>
</comment>
<keyword id="KW-0997">Cell inner membrane</keyword>
<keyword id="KW-1003">Cell membrane</keyword>
<keyword id="KW-0444">Lipid biosynthesis</keyword>
<keyword id="KW-0443">Lipid metabolism</keyword>
<keyword id="KW-0472">Membrane</keyword>
<keyword id="KW-0594">Phospholipid biosynthesis</keyword>
<keyword id="KW-1208">Phospholipid metabolism</keyword>
<keyword id="KW-1185">Reference proteome</keyword>
<keyword id="KW-0808">Transferase</keyword>
<keyword id="KW-0812">Transmembrane</keyword>
<keyword id="KW-1133">Transmembrane helix</keyword>
<feature type="chain" id="PRO_1000136123" description="Glycerol-3-phosphate acyltransferase">
    <location>
        <begin position="1"/>
        <end position="205"/>
    </location>
</feature>
<feature type="topological domain" description="Periplasmic" evidence="1">
    <location>
        <begin position="1"/>
        <end position="3"/>
    </location>
</feature>
<feature type="transmembrane region" description="Helical" evidence="1">
    <location>
        <begin position="4"/>
        <end position="24"/>
    </location>
</feature>
<feature type="topological domain" description="Cytoplasmic" evidence="1">
    <location>
        <begin position="25"/>
        <end position="52"/>
    </location>
</feature>
<feature type="transmembrane region" description="Helical" evidence="1">
    <location>
        <begin position="53"/>
        <end position="73"/>
    </location>
</feature>
<feature type="topological domain" description="Periplasmic" evidence="1">
    <location>
        <begin position="74"/>
        <end position="80"/>
    </location>
</feature>
<feature type="transmembrane region" description="Helical" evidence="1">
    <location>
        <begin position="81"/>
        <end position="101"/>
    </location>
</feature>
<feature type="topological domain" description="Cytoplasmic" evidence="1">
    <location>
        <begin position="102"/>
        <end position="111"/>
    </location>
</feature>
<feature type="transmembrane region" description="Helical" evidence="1">
    <location>
        <begin position="112"/>
        <end position="132"/>
    </location>
</feature>
<feature type="topological domain" description="Periplasmic" evidence="1">
    <location>
        <begin position="133"/>
        <end position="137"/>
    </location>
</feature>
<feature type="transmembrane region" description="Helical" evidence="1">
    <location>
        <begin position="138"/>
        <end position="158"/>
    </location>
</feature>
<feature type="topological domain" description="Cytoplasmic" evidence="1">
    <location>
        <begin position="159"/>
        <end position="205"/>
    </location>
</feature>
<accession>B2U1G3</accession>
<organism>
    <name type="scientific">Shigella boydii serotype 18 (strain CDC 3083-94 / BS512)</name>
    <dbReference type="NCBI Taxonomy" id="344609"/>
    <lineage>
        <taxon>Bacteria</taxon>
        <taxon>Pseudomonadati</taxon>
        <taxon>Pseudomonadota</taxon>
        <taxon>Gammaproteobacteria</taxon>
        <taxon>Enterobacterales</taxon>
        <taxon>Enterobacteriaceae</taxon>
        <taxon>Shigella</taxon>
    </lineage>
</organism>
<evidence type="ECO:0000255" key="1">
    <source>
        <dbReference type="HAMAP-Rule" id="MF_01043"/>
    </source>
</evidence>